<dbReference type="EC" id="7.1.1.-" evidence="1"/>
<dbReference type="EMBL" id="AP009369">
    <property type="protein sequence ID" value="BAF50079.1"/>
    <property type="molecule type" value="Genomic_DNA"/>
</dbReference>
<dbReference type="RefSeq" id="YP_001123254.1">
    <property type="nucleotide sequence ID" value="NC_009268.1"/>
</dbReference>
<dbReference type="SMR" id="A4QK74"/>
<dbReference type="GeneID" id="4962620"/>
<dbReference type="GO" id="GO:0009535">
    <property type="term" value="C:chloroplast thylakoid membrane"/>
    <property type="evidence" value="ECO:0007669"/>
    <property type="project" value="UniProtKB-SubCell"/>
</dbReference>
<dbReference type="GO" id="GO:0051539">
    <property type="term" value="F:4 iron, 4 sulfur cluster binding"/>
    <property type="evidence" value="ECO:0007669"/>
    <property type="project" value="UniProtKB-KW"/>
</dbReference>
<dbReference type="GO" id="GO:0005506">
    <property type="term" value="F:iron ion binding"/>
    <property type="evidence" value="ECO:0007669"/>
    <property type="project" value="UniProtKB-UniRule"/>
</dbReference>
<dbReference type="GO" id="GO:0008137">
    <property type="term" value="F:NADH dehydrogenase (ubiquinone) activity"/>
    <property type="evidence" value="ECO:0007669"/>
    <property type="project" value="InterPro"/>
</dbReference>
<dbReference type="GO" id="GO:0048038">
    <property type="term" value="F:quinone binding"/>
    <property type="evidence" value="ECO:0007669"/>
    <property type="project" value="UniProtKB-KW"/>
</dbReference>
<dbReference type="GO" id="GO:0019684">
    <property type="term" value="P:photosynthesis, light reaction"/>
    <property type="evidence" value="ECO:0007669"/>
    <property type="project" value="UniProtKB-UniRule"/>
</dbReference>
<dbReference type="FunFam" id="3.30.70.3270:FF:000006">
    <property type="entry name" value="NAD(P)H-quinone oxidoreductase subunit I, chloroplastic"/>
    <property type="match status" value="1"/>
</dbReference>
<dbReference type="Gene3D" id="3.30.70.3270">
    <property type="match status" value="1"/>
</dbReference>
<dbReference type="HAMAP" id="MF_01351">
    <property type="entry name" value="NDH1_NuoI"/>
    <property type="match status" value="1"/>
</dbReference>
<dbReference type="InterPro" id="IPR017896">
    <property type="entry name" value="4Fe4S_Fe-S-bd"/>
</dbReference>
<dbReference type="InterPro" id="IPR017900">
    <property type="entry name" value="4Fe4S_Fe_S_CS"/>
</dbReference>
<dbReference type="InterPro" id="IPR010226">
    <property type="entry name" value="NADH_quinone_OxRdtase_chainI"/>
</dbReference>
<dbReference type="InterPro" id="IPR004497">
    <property type="entry name" value="NDHI"/>
</dbReference>
<dbReference type="NCBIfam" id="TIGR00403">
    <property type="entry name" value="ndhI"/>
    <property type="match status" value="1"/>
</dbReference>
<dbReference type="NCBIfam" id="TIGR01971">
    <property type="entry name" value="NuoI"/>
    <property type="match status" value="1"/>
</dbReference>
<dbReference type="NCBIfam" id="NF004537">
    <property type="entry name" value="PRK05888.1-3"/>
    <property type="match status" value="1"/>
</dbReference>
<dbReference type="PANTHER" id="PTHR47275">
    <property type="entry name" value="NAD(P)H-QUINONE OXIDOREDUCTASE SUBUNIT I, CHLOROPLASTIC"/>
    <property type="match status" value="1"/>
</dbReference>
<dbReference type="PANTHER" id="PTHR47275:SF1">
    <property type="entry name" value="NAD(P)H-QUINONE OXIDOREDUCTASE SUBUNIT I, CHLOROPLASTIC"/>
    <property type="match status" value="1"/>
</dbReference>
<dbReference type="Pfam" id="PF13187">
    <property type="entry name" value="Fer4_9"/>
    <property type="match status" value="1"/>
</dbReference>
<dbReference type="SUPFAM" id="SSF54862">
    <property type="entry name" value="4Fe-4S ferredoxins"/>
    <property type="match status" value="1"/>
</dbReference>
<dbReference type="PROSITE" id="PS00198">
    <property type="entry name" value="4FE4S_FER_1"/>
    <property type="match status" value="2"/>
</dbReference>
<dbReference type="PROSITE" id="PS51379">
    <property type="entry name" value="4FE4S_FER_2"/>
    <property type="match status" value="2"/>
</dbReference>
<comment type="function">
    <text evidence="1">NDH shuttles electrons from NAD(P)H:plastoquinone, via FMN and iron-sulfur (Fe-S) centers, to quinones in the photosynthetic chain and possibly in a chloroplast respiratory chain. The immediate electron acceptor for the enzyme in this species is believed to be plastoquinone. Couples the redox reaction to proton translocation, and thus conserves the redox energy in a proton gradient.</text>
</comment>
<comment type="catalytic activity">
    <reaction evidence="1">
        <text>a plastoquinone + NADH + (n+1) H(+)(in) = a plastoquinol + NAD(+) + n H(+)(out)</text>
        <dbReference type="Rhea" id="RHEA:42608"/>
        <dbReference type="Rhea" id="RHEA-COMP:9561"/>
        <dbReference type="Rhea" id="RHEA-COMP:9562"/>
        <dbReference type="ChEBI" id="CHEBI:15378"/>
        <dbReference type="ChEBI" id="CHEBI:17757"/>
        <dbReference type="ChEBI" id="CHEBI:57540"/>
        <dbReference type="ChEBI" id="CHEBI:57945"/>
        <dbReference type="ChEBI" id="CHEBI:62192"/>
    </reaction>
</comment>
<comment type="catalytic activity">
    <reaction evidence="1">
        <text>a plastoquinone + NADPH + (n+1) H(+)(in) = a plastoquinol + NADP(+) + n H(+)(out)</text>
        <dbReference type="Rhea" id="RHEA:42612"/>
        <dbReference type="Rhea" id="RHEA-COMP:9561"/>
        <dbReference type="Rhea" id="RHEA-COMP:9562"/>
        <dbReference type="ChEBI" id="CHEBI:15378"/>
        <dbReference type="ChEBI" id="CHEBI:17757"/>
        <dbReference type="ChEBI" id="CHEBI:57783"/>
        <dbReference type="ChEBI" id="CHEBI:58349"/>
        <dbReference type="ChEBI" id="CHEBI:62192"/>
    </reaction>
</comment>
<comment type="cofactor">
    <cofactor evidence="1">
        <name>[4Fe-4S] cluster</name>
        <dbReference type="ChEBI" id="CHEBI:49883"/>
    </cofactor>
    <text evidence="1">Binds 2 [4Fe-4S] clusters per subunit.</text>
</comment>
<comment type="subunit">
    <text evidence="1">NDH is composed of at least 16 different subunits, 5 of which are encoded in the nucleus.</text>
</comment>
<comment type="subcellular location">
    <subcellularLocation>
        <location evidence="1">Plastid</location>
        <location evidence="1">Chloroplast thylakoid membrane</location>
        <topology evidence="1">Peripheral membrane protein</topology>
    </subcellularLocation>
</comment>
<comment type="similarity">
    <text evidence="1">Belongs to the complex I 23 kDa subunit family.</text>
</comment>
<gene>
    <name evidence="1" type="primary">ndhI</name>
</gene>
<proteinExistence type="inferred from homology"/>
<geneLocation type="chloroplast"/>
<protein>
    <recommendedName>
        <fullName evidence="1">NAD(P)H-quinone oxidoreductase subunit I, chloroplastic</fullName>
        <ecNumber evidence="1">7.1.1.-</ecNumber>
    </recommendedName>
    <alternativeName>
        <fullName evidence="1">NAD(P)H dehydrogenase subunit I</fullName>
        <shortName evidence="1">NDH subunit I</shortName>
    </alternativeName>
    <alternativeName>
        <fullName evidence="1">NADH-plastoquinone oxidoreductase subunit I</fullName>
    </alternativeName>
</protein>
<organism>
    <name type="scientific">Arabis hirsuta</name>
    <name type="common">Hairy rock-cress</name>
    <name type="synonym">Turritis hirsuta</name>
    <dbReference type="NCBI Taxonomy" id="78191"/>
    <lineage>
        <taxon>Eukaryota</taxon>
        <taxon>Viridiplantae</taxon>
        <taxon>Streptophyta</taxon>
        <taxon>Embryophyta</taxon>
        <taxon>Tracheophyta</taxon>
        <taxon>Spermatophyta</taxon>
        <taxon>Magnoliopsida</taxon>
        <taxon>eudicotyledons</taxon>
        <taxon>Gunneridae</taxon>
        <taxon>Pentapetalae</taxon>
        <taxon>rosids</taxon>
        <taxon>malvids</taxon>
        <taxon>Brassicales</taxon>
        <taxon>Brassicaceae</taxon>
        <taxon>Arabideae</taxon>
        <taxon>Arabis</taxon>
    </lineage>
</organism>
<name>NDHI_ARAHI</name>
<keyword id="KW-0004">4Fe-4S</keyword>
<keyword id="KW-0150">Chloroplast</keyword>
<keyword id="KW-0408">Iron</keyword>
<keyword id="KW-0411">Iron-sulfur</keyword>
<keyword id="KW-0472">Membrane</keyword>
<keyword id="KW-0479">Metal-binding</keyword>
<keyword id="KW-0520">NAD</keyword>
<keyword id="KW-0521">NADP</keyword>
<keyword id="KW-0934">Plastid</keyword>
<keyword id="KW-0618">Plastoquinone</keyword>
<keyword id="KW-0874">Quinone</keyword>
<keyword id="KW-0677">Repeat</keyword>
<keyword id="KW-0793">Thylakoid</keyword>
<keyword id="KW-1278">Translocase</keyword>
<sequence>MLPMITGFMNYGQQTLRAARYIGQGFMITLSHTNRLPVTIQYPYEKLITSERFRGRIHFEFDKCIACEVCVRVCPIDLPVVDWKLETNIRKKRLLNYSIDFGICIFCGNCVEYCPTNCLSMTEEYEFATYDRHELNYNQIALGRLPMSVIDDYTIRTIWNSPQTKNG</sequence>
<accession>A4QK74</accession>
<reference key="1">
    <citation type="submission" date="2007-03" db="EMBL/GenBank/DDBJ databases">
        <title>Sequencing analysis of Arabis hirsuta chloroplast DNA.</title>
        <authorList>
            <person name="Hosouchi T."/>
            <person name="Tsuruoka H."/>
            <person name="Kotani H."/>
        </authorList>
    </citation>
    <scope>NUCLEOTIDE SEQUENCE [LARGE SCALE GENOMIC DNA]</scope>
</reference>
<evidence type="ECO:0000255" key="1">
    <source>
        <dbReference type="HAMAP-Rule" id="MF_01351"/>
    </source>
</evidence>
<feature type="chain" id="PRO_0000298568" description="NAD(P)H-quinone oxidoreductase subunit I, chloroplastic">
    <location>
        <begin position="1"/>
        <end position="167"/>
    </location>
</feature>
<feature type="domain" description="4Fe-4S ferredoxin-type 1" evidence="1">
    <location>
        <begin position="55"/>
        <end position="84"/>
    </location>
</feature>
<feature type="domain" description="4Fe-4S ferredoxin-type 2" evidence="1">
    <location>
        <begin position="95"/>
        <end position="124"/>
    </location>
</feature>
<feature type="binding site" evidence="1">
    <location>
        <position position="64"/>
    </location>
    <ligand>
        <name>[4Fe-4S] cluster</name>
        <dbReference type="ChEBI" id="CHEBI:49883"/>
        <label>1</label>
    </ligand>
</feature>
<feature type="binding site" evidence="1">
    <location>
        <position position="67"/>
    </location>
    <ligand>
        <name>[4Fe-4S] cluster</name>
        <dbReference type="ChEBI" id="CHEBI:49883"/>
        <label>1</label>
    </ligand>
</feature>
<feature type="binding site" evidence="1">
    <location>
        <position position="70"/>
    </location>
    <ligand>
        <name>[4Fe-4S] cluster</name>
        <dbReference type="ChEBI" id="CHEBI:49883"/>
        <label>1</label>
    </ligand>
</feature>
<feature type="binding site" evidence="1">
    <location>
        <position position="74"/>
    </location>
    <ligand>
        <name>[4Fe-4S] cluster</name>
        <dbReference type="ChEBI" id="CHEBI:49883"/>
        <label>2</label>
    </ligand>
</feature>
<feature type="binding site" evidence="1">
    <location>
        <position position="104"/>
    </location>
    <ligand>
        <name>[4Fe-4S] cluster</name>
        <dbReference type="ChEBI" id="CHEBI:49883"/>
        <label>2</label>
    </ligand>
</feature>
<feature type="binding site" evidence="1">
    <location>
        <position position="107"/>
    </location>
    <ligand>
        <name>[4Fe-4S] cluster</name>
        <dbReference type="ChEBI" id="CHEBI:49883"/>
        <label>2</label>
    </ligand>
</feature>
<feature type="binding site" evidence="1">
    <location>
        <position position="110"/>
    </location>
    <ligand>
        <name>[4Fe-4S] cluster</name>
        <dbReference type="ChEBI" id="CHEBI:49883"/>
        <label>2</label>
    </ligand>
</feature>
<feature type="binding site" evidence="1">
    <location>
        <position position="114"/>
    </location>
    <ligand>
        <name>[4Fe-4S] cluster</name>
        <dbReference type="ChEBI" id="CHEBI:49883"/>
        <label>1</label>
    </ligand>
</feature>